<evidence type="ECO:0000255" key="1">
    <source>
        <dbReference type="PROSITE-ProRule" id="PRU00307"/>
    </source>
</evidence>
<evidence type="ECO:0000269" key="2">
    <source>
    </source>
</evidence>
<evidence type="ECO:0000269" key="3">
    <source>
    </source>
</evidence>
<evidence type="ECO:0000305" key="4"/>
<evidence type="ECO:0000312" key="5">
    <source>
        <dbReference type="EMBL" id="CCP43907.1"/>
    </source>
</evidence>
<organism>
    <name type="scientific">Mycobacterium tuberculosis (strain ATCC 25618 / H37Rv)</name>
    <dbReference type="NCBI Taxonomy" id="83332"/>
    <lineage>
        <taxon>Bacteria</taxon>
        <taxon>Bacillati</taxon>
        <taxon>Actinomycetota</taxon>
        <taxon>Actinomycetes</taxon>
        <taxon>Mycobacteriales</taxon>
        <taxon>Mycobacteriaceae</taxon>
        <taxon>Mycobacterium</taxon>
        <taxon>Mycobacterium tuberculosis complex</taxon>
    </lineage>
</organism>
<name>R1152_MYCTU</name>
<gene>
    <name evidence="5" type="ordered locus">Rv1152</name>
</gene>
<feature type="chain" id="PRO_0000461848" description="HTH-type transcriptional regulator Rv1152">
    <location>
        <begin position="1"/>
        <end position="121"/>
    </location>
</feature>
<feature type="domain" description="HTH gntR-type" evidence="1">
    <location>
        <begin position="15"/>
        <end position="83"/>
    </location>
</feature>
<feature type="DNA-binding region" description="H-T-H motif" evidence="1">
    <location>
        <begin position="43"/>
        <end position="62"/>
    </location>
</feature>
<protein>
    <recommendedName>
        <fullName evidence="4">HTH-type transcriptional regulator Rv1152</fullName>
    </recommendedName>
</protein>
<sequence>MELRDWLRVDVKAGKPLFDQLRTQVIDGVRAGALPPGTRLPTVRDLAGQLGVAANTVARAYRELESAAIVETRGRFGTFISRFDPTDAAMAAAAKEYVGVARALGLTKSDAMRYLTHVPDD</sequence>
<reference key="1">
    <citation type="journal article" date="1998" name="Nature">
        <title>Deciphering the biology of Mycobacterium tuberculosis from the complete genome sequence.</title>
        <authorList>
            <person name="Cole S.T."/>
            <person name="Brosch R."/>
            <person name="Parkhill J."/>
            <person name="Garnier T."/>
            <person name="Churcher C.M."/>
            <person name="Harris D.E."/>
            <person name="Gordon S.V."/>
            <person name="Eiglmeier K."/>
            <person name="Gas S."/>
            <person name="Barry C.E. III"/>
            <person name="Tekaia F."/>
            <person name="Badcock K."/>
            <person name="Basham D."/>
            <person name="Brown D."/>
            <person name="Chillingworth T."/>
            <person name="Connor R."/>
            <person name="Davies R.M."/>
            <person name="Devlin K."/>
            <person name="Feltwell T."/>
            <person name="Gentles S."/>
            <person name="Hamlin N."/>
            <person name="Holroyd S."/>
            <person name="Hornsby T."/>
            <person name="Jagels K."/>
            <person name="Krogh A."/>
            <person name="McLean J."/>
            <person name="Moule S."/>
            <person name="Murphy L.D."/>
            <person name="Oliver S."/>
            <person name="Osborne J."/>
            <person name="Quail M.A."/>
            <person name="Rajandream M.A."/>
            <person name="Rogers J."/>
            <person name="Rutter S."/>
            <person name="Seeger K."/>
            <person name="Skelton S."/>
            <person name="Squares S."/>
            <person name="Squares R."/>
            <person name="Sulston J.E."/>
            <person name="Taylor K."/>
            <person name="Whitehead S."/>
            <person name="Barrell B.G."/>
        </authorList>
    </citation>
    <scope>NUCLEOTIDE SEQUENCE [LARGE SCALE GENOMIC DNA]</scope>
    <source>
        <strain>ATCC 25618 / H37Rv</strain>
    </source>
</reference>
<reference key="2">
    <citation type="journal article" date="2011" name="Mol. Cell. Proteomics">
        <title>Proteogenomic analysis of Mycobacterium tuberculosis by high resolution mass spectrometry.</title>
        <authorList>
            <person name="Kelkar D.S."/>
            <person name="Kumar D."/>
            <person name="Kumar P."/>
            <person name="Balakrishnan L."/>
            <person name="Muthusamy B."/>
            <person name="Yadav A.K."/>
            <person name="Shrivastava P."/>
            <person name="Marimuthu A."/>
            <person name="Anand S."/>
            <person name="Sundaram H."/>
            <person name="Kingsbury R."/>
            <person name="Harsha H.C."/>
            <person name="Nair B."/>
            <person name="Prasad T.S."/>
            <person name="Chauhan D.S."/>
            <person name="Katoch K."/>
            <person name="Katoch V.M."/>
            <person name="Kumar P."/>
            <person name="Chaerkady R."/>
            <person name="Ramachandran S."/>
            <person name="Dash D."/>
            <person name="Pandey A."/>
        </authorList>
    </citation>
    <scope>IDENTIFICATION BY MASS SPECTROMETRY [LARGE SCALE ANALYSIS]</scope>
    <source>
        <strain>ATCC 25618 / H37Rv</strain>
    </source>
</reference>
<reference key="3">
    <citation type="journal article" date="2016" name="Sci. Rep.">
        <title>Mycobacterium tuberculosis Rv1152 is a Novel GntR Family Transcriptional Regulator Involved in Intrinsic Vancomycin Resistance and is a Potential Vancomycin Adjuvant Target.</title>
        <authorList>
            <person name="Zeng J."/>
            <person name="Deng W."/>
            <person name="Yang W."/>
            <person name="Luo H."/>
            <person name="Duan X."/>
            <person name="Xie L."/>
            <person name="Li P."/>
            <person name="Wang R."/>
            <person name="Fu T."/>
            <person name="Abdalla A.E."/>
            <person name="Xie J."/>
        </authorList>
    </citation>
    <scope>FUNCTION</scope>
    <scope>SUBCELLULAR LOCATION</scope>
    <scope>OVEREXPRESSION IN M.SMEGMATIS</scope>
    <source>
        <strain>H37Rv</strain>
    </source>
</reference>
<reference key="4">
    <citation type="journal article" date="2022" name="Front. Microbiol.">
        <title>Deficiency of GntR Family Regulator MSMEG_5174 Promotes Mycobacterium smegmatis Resistance to Aminoglycosides via Manipulating Purine Metabolism.</title>
        <authorList>
            <person name="Deng W."/>
            <person name="Zheng Z."/>
            <person name="Chen Y."/>
            <person name="Yang M."/>
            <person name="Yan J."/>
            <person name="Li W."/>
            <person name="Zeng J."/>
            <person name="Xie J."/>
            <person name="Gong S."/>
            <person name="Zeng H."/>
        </authorList>
    </citation>
    <scope>FUNCTION</scope>
</reference>
<proteinExistence type="evidence at protein level"/>
<accession>O06550</accession>
<accession>F2GGB8</accession>
<accession>I6XX77</accession>
<accession>Q7D8R6</accession>
<dbReference type="EMBL" id="AL123456">
    <property type="protein sequence ID" value="CCP43907.1"/>
    <property type="molecule type" value="Genomic_DNA"/>
</dbReference>
<dbReference type="RefSeq" id="NP_215668.1">
    <property type="nucleotide sequence ID" value="NC_000962.3"/>
</dbReference>
<dbReference type="RefSeq" id="WP_003406047.1">
    <property type="nucleotide sequence ID" value="NZ_NVQJ01000025.1"/>
</dbReference>
<dbReference type="SMR" id="O06550"/>
<dbReference type="FunCoup" id="O06550">
    <property type="interactions" value="1"/>
</dbReference>
<dbReference type="STRING" id="83332.Rv1152"/>
<dbReference type="PaxDb" id="83332-Rv1152"/>
<dbReference type="DNASU" id="885985"/>
<dbReference type="GeneID" id="885985"/>
<dbReference type="KEGG" id="mtu:Rv1152"/>
<dbReference type="KEGG" id="mtv:RVBD_1152"/>
<dbReference type="PATRIC" id="fig|83332.111.peg.1289"/>
<dbReference type="TubercuList" id="Rv1152"/>
<dbReference type="eggNOG" id="COG1725">
    <property type="taxonomic scope" value="Bacteria"/>
</dbReference>
<dbReference type="InParanoid" id="O06550"/>
<dbReference type="OrthoDB" id="4307011at2"/>
<dbReference type="PhylomeDB" id="O06550"/>
<dbReference type="Proteomes" id="UP000001584">
    <property type="component" value="Chromosome"/>
</dbReference>
<dbReference type="GO" id="GO:0005737">
    <property type="term" value="C:cytoplasm"/>
    <property type="evidence" value="ECO:0007669"/>
    <property type="project" value="UniProtKB-SubCell"/>
</dbReference>
<dbReference type="GO" id="GO:0005576">
    <property type="term" value="C:extracellular region"/>
    <property type="evidence" value="ECO:0007669"/>
    <property type="project" value="UniProtKB-KW"/>
</dbReference>
<dbReference type="GO" id="GO:0003677">
    <property type="term" value="F:DNA binding"/>
    <property type="evidence" value="ECO:0007669"/>
    <property type="project" value="UniProtKB-KW"/>
</dbReference>
<dbReference type="GO" id="GO:0003700">
    <property type="term" value="F:DNA-binding transcription factor activity"/>
    <property type="evidence" value="ECO:0007669"/>
    <property type="project" value="InterPro"/>
</dbReference>
<dbReference type="CDD" id="cd07377">
    <property type="entry name" value="WHTH_GntR"/>
    <property type="match status" value="1"/>
</dbReference>
<dbReference type="Gene3D" id="1.10.10.10">
    <property type="entry name" value="Winged helix-like DNA-binding domain superfamily/Winged helix DNA-binding domain"/>
    <property type="match status" value="1"/>
</dbReference>
<dbReference type="InterPro" id="IPR000524">
    <property type="entry name" value="Tscrpt_reg_HTH_GntR"/>
</dbReference>
<dbReference type="InterPro" id="IPR036388">
    <property type="entry name" value="WH-like_DNA-bd_sf"/>
</dbReference>
<dbReference type="InterPro" id="IPR036390">
    <property type="entry name" value="WH_DNA-bd_sf"/>
</dbReference>
<dbReference type="PANTHER" id="PTHR38445">
    <property type="entry name" value="HTH-TYPE TRANSCRIPTIONAL REPRESSOR YTRA"/>
    <property type="match status" value="1"/>
</dbReference>
<dbReference type="PANTHER" id="PTHR38445:SF9">
    <property type="entry name" value="HTH-TYPE TRANSCRIPTIONAL REPRESSOR YTRA"/>
    <property type="match status" value="1"/>
</dbReference>
<dbReference type="Pfam" id="PF00392">
    <property type="entry name" value="GntR"/>
    <property type="match status" value="1"/>
</dbReference>
<dbReference type="SMART" id="SM00345">
    <property type="entry name" value="HTH_GNTR"/>
    <property type="match status" value="1"/>
</dbReference>
<dbReference type="SUPFAM" id="SSF46785">
    <property type="entry name" value="Winged helix' DNA-binding domain"/>
    <property type="match status" value="1"/>
</dbReference>
<dbReference type="PROSITE" id="PS50949">
    <property type="entry name" value="HTH_GNTR"/>
    <property type="match status" value="1"/>
</dbReference>
<keyword id="KW-0134">Cell wall</keyword>
<keyword id="KW-0963">Cytoplasm</keyword>
<keyword id="KW-0238">DNA-binding</keyword>
<keyword id="KW-1185">Reference proteome</keyword>
<keyword id="KW-0964">Secreted</keyword>
<keyword id="KW-0804">Transcription</keyword>
<keyword id="KW-0805">Transcription regulation</keyword>
<comment type="function">
    <text evidence="2 3">Transcriptional regulator that modulates resistance to vancomycin and aminoglycosides (PubMed:27349953, PubMed:35898907). Negatively regulates the expression of several genes responsive to vancomycin, resulting in decreased susceptibility of bacteria to vancomycin (PubMed:27349953). Negatively regulates the expression of genes encoding the ribosome binding protein Hsp, the small subunit of sulfate adenylyltransferase CysD, the L-lysine-epsilon aminotransferase LAT and the protease HtpX (PubMed:27349953). Also modulates purine metabolism and aminoglycoside antibiotic resistance (PubMed:35898907). Negatively regulates the expression of purine metabolism-related genes and the accumulation of purine metabolites, which affects aminoglycoside antibiotic resistance (PubMed:35898907).</text>
</comment>
<comment type="subcellular location">
    <subcellularLocation>
        <location evidence="2">Cytoplasm</location>
    </subcellularLocation>
    <subcellularLocation>
        <location evidence="2">Secreted</location>
        <location evidence="2">Cell wall</location>
    </subcellularLocation>
    <text evidence="2">When overexpressed in M.smegmatis.</text>
</comment>
<comment type="miscellaneous">
    <text evidence="2">Overexpression of Rv1152 in M.smegmatis modifies its response to surface and acid stress (PubMed:27349953). Overexpression also confers M.smegmatis reduced susceptibility to vancomycin (PubMed:27349953).</text>
</comment>